<evidence type="ECO:0000255" key="1">
    <source>
        <dbReference type="HAMAP-Rule" id="MF_01478"/>
    </source>
</evidence>
<evidence type="ECO:0000256" key="2">
    <source>
        <dbReference type="SAM" id="MobiDB-lite"/>
    </source>
</evidence>
<dbReference type="EMBL" id="L77117">
    <property type="protein sequence ID" value="AAB98498.1"/>
    <property type="molecule type" value="Genomic_DNA"/>
</dbReference>
<dbReference type="PIR" id="D64363">
    <property type="entry name" value="D64363"/>
</dbReference>
<dbReference type="RefSeq" id="WP_010870009.1">
    <property type="nucleotide sequence ID" value="NC_000909.1"/>
</dbReference>
<dbReference type="SMR" id="P54048"/>
<dbReference type="FunCoup" id="P54048">
    <property type="interactions" value="68"/>
</dbReference>
<dbReference type="STRING" id="243232.MJ_0508"/>
<dbReference type="PaxDb" id="243232-MJ_0508"/>
<dbReference type="EnsemblBacteria" id="AAB98498">
    <property type="protein sequence ID" value="AAB98498"/>
    <property type="gene ID" value="MJ_0508"/>
</dbReference>
<dbReference type="GeneID" id="1451370"/>
<dbReference type="KEGG" id="mja:MJ_0508"/>
<dbReference type="eggNOG" id="arCOG04287">
    <property type="taxonomic scope" value="Archaea"/>
</dbReference>
<dbReference type="HOGENOM" id="CLU_114656_2_0_2"/>
<dbReference type="InParanoid" id="P54048"/>
<dbReference type="OrthoDB" id="3337at2157"/>
<dbReference type="Proteomes" id="UP000000805">
    <property type="component" value="Chromosome"/>
</dbReference>
<dbReference type="GO" id="GO:1990904">
    <property type="term" value="C:ribonucleoprotein complex"/>
    <property type="evidence" value="ECO:0007669"/>
    <property type="project" value="UniProtKB-KW"/>
</dbReference>
<dbReference type="GO" id="GO:0005840">
    <property type="term" value="C:ribosome"/>
    <property type="evidence" value="ECO:0007669"/>
    <property type="project" value="UniProtKB-KW"/>
</dbReference>
<dbReference type="GO" id="GO:0003735">
    <property type="term" value="F:structural constituent of ribosome"/>
    <property type="evidence" value="ECO:0007669"/>
    <property type="project" value="InterPro"/>
</dbReference>
<dbReference type="GO" id="GO:0006414">
    <property type="term" value="P:translational elongation"/>
    <property type="evidence" value="ECO:0007669"/>
    <property type="project" value="InterPro"/>
</dbReference>
<dbReference type="FunFam" id="1.10.10.1410:FF:000002">
    <property type="entry name" value="60S acidic ribosomal protein P2"/>
    <property type="match status" value="1"/>
</dbReference>
<dbReference type="Gene3D" id="1.10.10.1410">
    <property type="match status" value="1"/>
</dbReference>
<dbReference type="HAMAP" id="MF_01478">
    <property type="entry name" value="Ribosomal_L12_arch"/>
    <property type="match status" value="1"/>
</dbReference>
<dbReference type="InterPro" id="IPR038716">
    <property type="entry name" value="P1/P2_N_sf"/>
</dbReference>
<dbReference type="InterPro" id="IPR027534">
    <property type="entry name" value="Ribosomal_P1/P2"/>
</dbReference>
<dbReference type="InterPro" id="IPR022295">
    <property type="entry name" value="Ribosomal_P1_arc"/>
</dbReference>
<dbReference type="NCBIfam" id="TIGR03685">
    <property type="entry name" value="ribo_P1_arch"/>
    <property type="match status" value="1"/>
</dbReference>
<dbReference type="PANTHER" id="PTHR45696">
    <property type="entry name" value="60S ACIDIC RIBOSOMAL PROTEIN P1"/>
    <property type="match status" value="1"/>
</dbReference>
<dbReference type="PANTHER" id="PTHR45696:SF10">
    <property type="entry name" value="LARGE RIBOSOMAL SUBUNIT PROTEIN P1"/>
    <property type="match status" value="1"/>
</dbReference>
<dbReference type="Pfam" id="PF00428">
    <property type="entry name" value="Ribosomal_60s"/>
    <property type="match status" value="1"/>
</dbReference>
<proteinExistence type="inferred from homology"/>
<gene>
    <name evidence="1" type="primary">rpl12</name>
    <name type="ordered locus">MJ0508</name>
</gene>
<organism>
    <name type="scientific">Methanocaldococcus jannaschii (strain ATCC 43067 / DSM 2661 / JAL-1 / JCM 10045 / NBRC 100440)</name>
    <name type="common">Methanococcus jannaschii</name>
    <dbReference type="NCBI Taxonomy" id="243232"/>
    <lineage>
        <taxon>Archaea</taxon>
        <taxon>Methanobacteriati</taxon>
        <taxon>Methanobacteriota</taxon>
        <taxon>Methanomada group</taxon>
        <taxon>Methanococci</taxon>
        <taxon>Methanococcales</taxon>
        <taxon>Methanocaldococcaceae</taxon>
        <taxon>Methanocaldococcus</taxon>
    </lineage>
</organism>
<protein>
    <recommendedName>
        <fullName evidence="1">Large ribosomal subunit protein P1</fullName>
    </recommendedName>
    <alternativeName>
        <fullName evidence="1">50S ribosomal protein L12</fullName>
    </alternativeName>
</protein>
<reference key="1">
    <citation type="journal article" date="1996" name="Science">
        <title>Complete genome sequence of the methanogenic archaeon, Methanococcus jannaschii.</title>
        <authorList>
            <person name="Bult C.J."/>
            <person name="White O."/>
            <person name="Olsen G.J."/>
            <person name="Zhou L."/>
            <person name="Fleischmann R.D."/>
            <person name="Sutton G.G."/>
            <person name="Blake J.A."/>
            <person name="FitzGerald L.M."/>
            <person name="Clayton R.A."/>
            <person name="Gocayne J.D."/>
            <person name="Kerlavage A.R."/>
            <person name="Dougherty B.A."/>
            <person name="Tomb J.-F."/>
            <person name="Adams M.D."/>
            <person name="Reich C.I."/>
            <person name="Overbeek R."/>
            <person name="Kirkness E.F."/>
            <person name="Weinstock K.G."/>
            <person name="Merrick J.M."/>
            <person name="Glodek A."/>
            <person name="Scott J.L."/>
            <person name="Geoghagen N.S.M."/>
            <person name="Weidman J.F."/>
            <person name="Fuhrmann J.L."/>
            <person name="Nguyen D."/>
            <person name="Utterback T.R."/>
            <person name="Kelley J.M."/>
            <person name="Peterson J.D."/>
            <person name="Sadow P.W."/>
            <person name="Hanna M.C."/>
            <person name="Cotton M.D."/>
            <person name="Roberts K.M."/>
            <person name="Hurst M.A."/>
            <person name="Kaine B.P."/>
            <person name="Borodovsky M."/>
            <person name="Klenk H.-P."/>
            <person name="Fraser C.M."/>
            <person name="Smith H.O."/>
            <person name="Woese C.R."/>
            <person name="Venter J.C."/>
        </authorList>
    </citation>
    <scope>NUCLEOTIDE SEQUENCE [LARGE SCALE GENOMIC DNA]</scope>
    <source>
        <strain>ATCC 43067 / DSM 2661 / JAL-1 / JCM 10045 / NBRC 100440</strain>
    </source>
</reference>
<sequence>MEYIYAALLLHSAGKEITEDAIKAVLSAAGVEVDDARVKALVAGLEGVDIEEAIANAAMPVAAAPAAAAPAAAAEEKKEEEKKEEKKEEDTAAVAGLAALFG</sequence>
<feature type="chain" id="PRO_0000157630" description="Large ribosomal subunit protein P1">
    <location>
        <begin position="1"/>
        <end position="102"/>
    </location>
</feature>
<feature type="region of interest" description="Disordered" evidence="2">
    <location>
        <begin position="69"/>
        <end position="91"/>
    </location>
</feature>
<feature type="compositionally biased region" description="Basic and acidic residues" evidence="2">
    <location>
        <begin position="74"/>
        <end position="90"/>
    </location>
</feature>
<name>RL12_METJA</name>
<comment type="function">
    <text evidence="1">Forms part of the ribosomal stalk, playing a central role in the interaction of the ribosome with GTP-bound translation factors.</text>
</comment>
<comment type="subunit">
    <text evidence="1">Part of the 50S ribosomal subunit. Homodimer, it forms part of the ribosomal stalk which helps the ribosome interact with GTP-bound translation factors. Forms a heptameric uL10/P0(P1)2(P1)2(P1)2 complex, where uL10/P0 forms an elongated spine to which the P1 dimers bind in a sequential fashion.</text>
</comment>
<comment type="similarity">
    <text evidence="1">Belongs to the eukaryotic ribosomal protein P1/P2 family.</text>
</comment>
<keyword id="KW-1185">Reference proteome</keyword>
<keyword id="KW-0687">Ribonucleoprotein</keyword>
<keyword id="KW-0689">Ribosomal protein</keyword>
<accession>P54048</accession>